<proteinExistence type="evidence at protein level"/>
<organism>
    <name type="scientific">Mus musculus</name>
    <name type="common">Mouse</name>
    <dbReference type="NCBI Taxonomy" id="10090"/>
    <lineage>
        <taxon>Eukaryota</taxon>
        <taxon>Metazoa</taxon>
        <taxon>Chordata</taxon>
        <taxon>Craniata</taxon>
        <taxon>Vertebrata</taxon>
        <taxon>Euteleostomi</taxon>
        <taxon>Mammalia</taxon>
        <taxon>Eutheria</taxon>
        <taxon>Euarchontoglires</taxon>
        <taxon>Glires</taxon>
        <taxon>Rodentia</taxon>
        <taxon>Myomorpha</taxon>
        <taxon>Muroidea</taxon>
        <taxon>Muridae</taxon>
        <taxon>Murinae</taxon>
        <taxon>Mus</taxon>
        <taxon>Mus</taxon>
    </lineage>
</organism>
<feature type="chain" id="PRO_0000064820" description="BAI1-associated protein 3">
    <location>
        <begin position="1"/>
        <end position="1150"/>
    </location>
</feature>
<feature type="domain" description="C2 1" evidence="2">
    <location>
        <begin position="139"/>
        <end position="298"/>
    </location>
</feature>
<feature type="domain" description="MHD1" evidence="3">
    <location>
        <begin position="626"/>
        <end position="747"/>
    </location>
</feature>
<feature type="domain" description="MHD2" evidence="4">
    <location>
        <begin position="851"/>
        <end position="959"/>
    </location>
</feature>
<feature type="domain" description="C2 2" evidence="2">
    <location>
        <begin position="973"/>
        <end position="1099"/>
    </location>
</feature>
<feature type="region of interest" description="Disordered" evidence="5">
    <location>
        <begin position="22"/>
        <end position="44"/>
    </location>
</feature>
<feature type="region of interest" description="Disordered" evidence="5">
    <location>
        <begin position="193"/>
        <end position="214"/>
    </location>
</feature>
<feature type="binding site" evidence="2">
    <location>
        <position position="174"/>
    </location>
    <ligand>
        <name>Ca(2+)</name>
        <dbReference type="ChEBI" id="CHEBI:29108"/>
        <label>1</label>
    </ligand>
</feature>
<feature type="binding site" evidence="2">
    <location>
        <position position="180"/>
    </location>
    <ligand>
        <name>Ca(2+)</name>
        <dbReference type="ChEBI" id="CHEBI:29108"/>
        <label>1</label>
    </ligand>
</feature>
<feature type="binding site" evidence="2">
    <location>
        <position position="258"/>
    </location>
    <ligand>
        <name>Ca(2+)</name>
        <dbReference type="ChEBI" id="CHEBI:29108"/>
        <label>1</label>
    </ligand>
</feature>
<feature type="binding site" evidence="2">
    <location>
        <position position="260"/>
    </location>
    <ligand>
        <name>Ca(2+)</name>
        <dbReference type="ChEBI" id="CHEBI:29108"/>
        <label>1</label>
    </ligand>
</feature>
<feature type="binding site" evidence="2">
    <location>
        <position position="1003"/>
    </location>
    <ligand>
        <name>Ca(2+)</name>
        <dbReference type="ChEBI" id="CHEBI:29108"/>
        <label>3</label>
    </ligand>
</feature>
<feature type="binding site" evidence="2">
    <location>
        <position position="1004"/>
    </location>
    <ligand>
        <name>Ca(2+)</name>
        <dbReference type="ChEBI" id="CHEBI:29108"/>
        <label>2</label>
    </ligand>
</feature>
<feature type="binding site" evidence="2">
    <location>
        <position position="1004"/>
    </location>
    <ligand>
        <name>Ca(2+)</name>
        <dbReference type="ChEBI" id="CHEBI:29108"/>
        <label>3</label>
    </ligand>
</feature>
<feature type="binding site" evidence="2">
    <location>
        <position position="1010"/>
    </location>
    <ligand>
        <name>Ca(2+)</name>
        <dbReference type="ChEBI" id="CHEBI:29108"/>
        <label>2</label>
    </ligand>
</feature>
<feature type="binding site" evidence="2">
    <location>
        <position position="1068"/>
    </location>
    <ligand>
        <name>Ca(2+)</name>
        <dbReference type="ChEBI" id="CHEBI:29108"/>
        <label>2</label>
    </ligand>
</feature>
<feature type="binding site" evidence="2">
    <location>
        <position position="1068"/>
    </location>
    <ligand>
        <name>Ca(2+)</name>
        <dbReference type="ChEBI" id="CHEBI:29108"/>
        <label>3</label>
    </ligand>
</feature>
<feature type="binding site" evidence="2">
    <location>
        <position position="1070"/>
    </location>
    <ligand>
        <name>Ca(2+)</name>
        <dbReference type="ChEBI" id="CHEBI:29108"/>
        <label>2</label>
    </ligand>
</feature>
<feature type="binding site" evidence="2">
    <location>
        <position position="1070"/>
    </location>
    <ligand>
        <name>Ca(2+)</name>
        <dbReference type="ChEBI" id="CHEBI:29108"/>
        <label>3</label>
    </ligand>
</feature>
<feature type="binding site" evidence="2">
    <location>
        <position position="1070"/>
    </location>
    <ligand>
        <name>Ca(2+)</name>
        <dbReference type="ChEBI" id="CHEBI:29108"/>
        <label>4</label>
    </ligand>
</feature>
<feature type="binding site" evidence="2">
    <location>
        <position position="1073"/>
    </location>
    <ligand>
        <name>Ca(2+)</name>
        <dbReference type="ChEBI" id="CHEBI:29108"/>
        <label>4</label>
    </ligand>
</feature>
<feature type="binding site" evidence="2">
    <location>
        <position position="1076"/>
    </location>
    <ligand>
        <name>Ca(2+)</name>
        <dbReference type="ChEBI" id="CHEBI:29108"/>
        <label>3</label>
    </ligand>
</feature>
<feature type="binding site" evidence="2">
    <location>
        <position position="1076"/>
    </location>
    <ligand>
        <name>Ca(2+)</name>
        <dbReference type="ChEBI" id="CHEBI:29108"/>
        <label>4</label>
    </ligand>
</feature>
<feature type="splice variant" id="VSP_061750" description="In isoform 1.">
    <original>ILKVDFFTLTFRQLERL</original>
    <variation>Q</variation>
    <location>
        <begin position="585"/>
        <end position="601"/>
    </location>
</feature>
<feature type="sequence conflict" description="In Ref. 2; AAS21653." evidence="11" ref="2">
    <location>
        <begin position="178"/>
        <end position="179"/>
    </location>
</feature>
<feature type="sequence conflict" description="In Ref. 2; AAS21653." evidence="11" ref="2">
    <original>Y</original>
    <variation>D</variation>
    <location>
        <position position="182"/>
    </location>
</feature>
<feature type="sequence conflict" description="In Ref. 2; AAS21653." evidence="11" ref="2">
    <original>P</original>
    <variation>S</variation>
    <location>
        <position position="197"/>
    </location>
</feature>
<feature type="sequence conflict" description="In Ref. 2; AAS21653." evidence="11" ref="2">
    <original>Q</original>
    <variation>R</variation>
    <location>
        <position position="200"/>
    </location>
</feature>
<feature type="sequence conflict" description="In Ref. 2; AAS21653." evidence="11" ref="2">
    <original>S</original>
    <variation>N</variation>
    <location>
        <position position="359"/>
    </location>
</feature>
<evidence type="ECO:0000250" key="1">
    <source>
        <dbReference type="UniProtKB" id="O94812"/>
    </source>
</evidence>
<evidence type="ECO:0000255" key="2">
    <source>
        <dbReference type="PROSITE-ProRule" id="PRU00041"/>
    </source>
</evidence>
<evidence type="ECO:0000255" key="3">
    <source>
        <dbReference type="PROSITE-ProRule" id="PRU00587"/>
    </source>
</evidence>
<evidence type="ECO:0000255" key="4">
    <source>
        <dbReference type="PROSITE-ProRule" id="PRU00588"/>
    </source>
</evidence>
<evidence type="ECO:0000256" key="5">
    <source>
        <dbReference type="SAM" id="MobiDB-lite"/>
    </source>
</evidence>
<evidence type="ECO:0000269" key="6">
    <source>
    </source>
</evidence>
<evidence type="ECO:0000269" key="7">
    <source>
    </source>
</evidence>
<evidence type="ECO:0000303" key="8">
    <source>
    </source>
</evidence>
<evidence type="ECO:0000303" key="9">
    <source>
    </source>
</evidence>
<evidence type="ECO:0000303" key="10">
    <source>
    </source>
</evidence>
<evidence type="ECO:0000305" key="11"/>
<evidence type="ECO:0000305" key="12">
    <source>
    </source>
</evidence>
<evidence type="ECO:0000312" key="13">
    <source>
        <dbReference type="MGI" id="MGI:2685783"/>
    </source>
</evidence>
<dbReference type="EMBL" id="AK122358">
    <property type="protein sequence ID" value="BAC65640.1"/>
    <property type="status" value="ALT_SEQ"/>
    <property type="molecule type" value="Transcribed_RNA"/>
</dbReference>
<dbReference type="EMBL" id="AY491413">
    <property type="protein sequence ID" value="AAS21653.1"/>
    <property type="molecule type" value="Genomic_DNA"/>
</dbReference>
<dbReference type="EMBL" id="AC122454">
    <property type="status" value="NOT_ANNOTATED_CDS"/>
    <property type="molecule type" value="Genomic_DNA"/>
</dbReference>
<dbReference type="CCDS" id="CCDS50033.1">
    <molecule id="Q80TT2-2"/>
</dbReference>
<dbReference type="RefSeq" id="NP_001156742.1">
    <molecule id="Q80TT2-2"/>
    <property type="nucleotide sequence ID" value="NM_001163270.2"/>
</dbReference>
<dbReference type="RefSeq" id="NP_001395135.1">
    <molecule id="Q80TT2-2"/>
    <property type="nucleotide sequence ID" value="NM_001408206.1"/>
</dbReference>
<dbReference type="RefSeq" id="XP_006524705.1">
    <property type="nucleotide sequence ID" value="XM_006524642.2"/>
</dbReference>
<dbReference type="RefSeq" id="XP_006524706.1">
    <molecule id="Q80TT2-2"/>
    <property type="nucleotide sequence ID" value="XM_006524643.5"/>
</dbReference>
<dbReference type="SMR" id="Q80TT2"/>
<dbReference type="FunCoup" id="Q80TT2">
    <property type="interactions" value="272"/>
</dbReference>
<dbReference type="STRING" id="10090.ENSMUSP00000138188"/>
<dbReference type="GlyGen" id="Q80TT2">
    <property type="glycosylation" value="2 sites, 1 N-linked glycan (1 site)"/>
</dbReference>
<dbReference type="iPTMnet" id="Q80TT2"/>
<dbReference type="PhosphoSitePlus" id="Q80TT2"/>
<dbReference type="PaxDb" id="10090-ENSMUSP00000138188"/>
<dbReference type="ProteomicsDB" id="265202"/>
<dbReference type="ProteomicsDB" id="320688"/>
<dbReference type="Antibodypedia" id="23051">
    <property type="antibodies" value="139 antibodies from 26 providers"/>
</dbReference>
<dbReference type="DNASU" id="545192"/>
<dbReference type="Ensembl" id="ENSMUST00000182056.8">
    <molecule id="Q80TT2-2"/>
    <property type="protein sequence ID" value="ENSMUSP00000138188.2"/>
    <property type="gene ID" value="ENSMUSG00000047507.14"/>
</dbReference>
<dbReference type="GeneID" id="545192"/>
<dbReference type="KEGG" id="mmu:545192"/>
<dbReference type="AGR" id="MGI:2685783"/>
<dbReference type="CTD" id="8938"/>
<dbReference type="MGI" id="MGI:2685783">
    <property type="gene designation" value="Baiap3"/>
</dbReference>
<dbReference type="VEuPathDB" id="HostDB:ENSMUSG00000047507"/>
<dbReference type="eggNOG" id="KOG1328">
    <property type="taxonomic scope" value="Eukaryota"/>
</dbReference>
<dbReference type="GeneTree" id="ENSGT00730000110939"/>
<dbReference type="HOGENOM" id="CLU_003295_2_0_1"/>
<dbReference type="InParanoid" id="Q80TT2"/>
<dbReference type="OMA" id="WLAEAMN"/>
<dbReference type="OrthoDB" id="7976202at2759"/>
<dbReference type="BioGRID-ORCS" id="545192">
    <property type="hits" value="3 hits in 78 CRISPR screens"/>
</dbReference>
<dbReference type="ChiTaRS" id="Baiap3">
    <property type="organism name" value="mouse"/>
</dbReference>
<dbReference type="PRO" id="PR:Q80TT2"/>
<dbReference type="Proteomes" id="UP000000589">
    <property type="component" value="Chromosome 17"/>
</dbReference>
<dbReference type="RNAct" id="Q80TT2">
    <property type="molecule type" value="protein"/>
</dbReference>
<dbReference type="Bgee" id="ENSMUSG00000047507">
    <property type="expression patterns" value="Expressed in arcuate nucleus of hypothalamus and 103 other cell types or tissues"/>
</dbReference>
<dbReference type="GO" id="GO:0005829">
    <property type="term" value="C:cytosol"/>
    <property type="evidence" value="ECO:0000250"/>
    <property type="project" value="UniProtKB"/>
</dbReference>
<dbReference type="GO" id="GO:0098982">
    <property type="term" value="C:GABA-ergic synapse"/>
    <property type="evidence" value="ECO:0000314"/>
    <property type="project" value="SynGO"/>
</dbReference>
<dbReference type="GO" id="GO:0031902">
    <property type="term" value="C:late endosome membrane"/>
    <property type="evidence" value="ECO:0000250"/>
    <property type="project" value="UniProtKB"/>
</dbReference>
<dbReference type="GO" id="GO:0005886">
    <property type="term" value="C:plasma membrane"/>
    <property type="evidence" value="ECO:0000250"/>
    <property type="project" value="UniProtKB"/>
</dbReference>
<dbReference type="GO" id="GO:0098793">
    <property type="term" value="C:presynapse"/>
    <property type="evidence" value="ECO:0007669"/>
    <property type="project" value="GOC"/>
</dbReference>
<dbReference type="GO" id="GO:0055038">
    <property type="term" value="C:recycling endosome membrane"/>
    <property type="evidence" value="ECO:0000250"/>
    <property type="project" value="UniProtKB"/>
</dbReference>
<dbReference type="GO" id="GO:0032588">
    <property type="term" value="C:trans-Golgi network membrane"/>
    <property type="evidence" value="ECO:0000250"/>
    <property type="project" value="UniProtKB"/>
</dbReference>
<dbReference type="GO" id="GO:0005509">
    <property type="term" value="F:calcium ion binding"/>
    <property type="evidence" value="ECO:0000250"/>
    <property type="project" value="UniProtKB"/>
</dbReference>
<dbReference type="GO" id="GO:0005543">
    <property type="term" value="F:phospholipid binding"/>
    <property type="evidence" value="ECO:0000250"/>
    <property type="project" value="UniProtKB"/>
</dbReference>
<dbReference type="GO" id="GO:0000149">
    <property type="term" value="F:SNARE binding"/>
    <property type="evidence" value="ECO:0000250"/>
    <property type="project" value="UniProtKB"/>
</dbReference>
<dbReference type="GO" id="GO:0019905">
    <property type="term" value="F:syntaxin binding"/>
    <property type="evidence" value="ECO:0007669"/>
    <property type="project" value="Ensembl"/>
</dbReference>
<dbReference type="GO" id="GO:1990502">
    <property type="term" value="P:dense core granule maturation"/>
    <property type="evidence" value="ECO:0007669"/>
    <property type="project" value="Ensembl"/>
</dbReference>
<dbReference type="GO" id="GO:0006887">
    <property type="term" value="P:exocytosis"/>
    <property type="evidence" value="ECO:0007669"/>
    <property type="project" value="UniProtKB-KW"/>
</dbReference>
<dbReference type="GO" id="GO:0007186">
    <property type="term" value="P:G protein-coupled receptor signaling pathway"/>
    <property type="evidence" value="ECO:0000266"/>
    <property type="project" value="MGI"/>
</dbReference>
<dbReference type="GO" id="GO:0050804">
    <property type="term" value="P:modulation of chemical synaptic transmission"/>
    <property type="evidence" value="ECO:0000314"/>
    <property type="project" value="SynGO"/>
</dbReference>
<dbReference type="GO" id="GO:0035774">
    <property type="term" value="P:positive regulation of insulin secretion involved in cellular response to glucose stimulus"/>
    <property type="evidence" value="ECO:0000250"/>
    <property type="project" value="UniProtKB"/>
</dbReference>
<dbReference type="GO" id="GO:0001956">
    <property type="term" value="P:positive regulation of neurotransmitter secretion"/>
    <property type="evidence" value="ECO:0000250"/>
    <property type="project" value="UniProtKB"/>
</dbReference>
<dbReference type="GO" id="GO:0050795">
    <property type="term" value="P:regulation of behavior"/>
    <property type="evidence" value="ECO:0000315"/>
    <property type="project" value="UniProtKB"/>
</dbReference>
<dbReference type="GO" id="GO:1905413">
    <property type="term" value="P:regulation of dense core granule exocytosis"/>
    <property type="evidence" value="ECO:0007669"/>
    <property type="project" value="Ensembl"/>
</dbReference>
<dbReference type="GO" id="GO:0032228">
    <property type="term" value="P:regulation of synaptic transmission, GABAergic"/>
    <property type="evidence" value="ECO:0000315"/>
    <property type="project" value="UniProtKB"/>
</dbReference>
<dbReference type="GO" id="GO:0042147">
    <property type="term" value="P:retrograde transport, endosome to Golgi"/>
    <property type="evidence" value="ECO:0000250"/>
    <property type="project" value="UniProtKB"/>
</dbReference>
<dbReference type="CDD" id="cd08676">
    <property type="entry name" value="C2A_Munc13-like"/>
    <property type="match status" value="1"/>
</dbReference>
<dbReference type="CDD" id="cd04009">
    <property type="entry name" value="C2B_Munc13-like"/>
    <property type="match status" value="1"/>
</dbReference>
<dbReference type="FunFam" id="1.10.357.50:FF:000007">
    <property type="entry name" value="BAI1 associated protein 3"/>
    <property type="match status" value="1"/>
</dbReference>
<dbReference type="FunFam" id="2.60.40.150:FF:000109">
    <property type="entry name" value="BAI1-associated protein 3 isoform X1"/>
    <property type="match status" value="1"/>
</dbReference>
<dbReference type="FunFam" id="2.60.40.150:FF:000134">
    <property type="entry name" value="BAI1-associated protein 3 isoform X1"/>
    <property type="match status" value="1"/>
</dbReference>
<dbReference type="Gene3D" id="1.10.357.50">
    <property type="match status" value="1"/>
</dbReference>
<dbReference type="Gene3D" id="2.60.40.150">
    <property type="entry name" value="C2 domain"/>
    <property type="match status" value="2"/>
</dbReference>
<dbReference type="InterPro" id="IPR000008">
    <property type="entry name" value="C2_dom"/>
</dbReference>
<dbReference type="InterPro" id="IPR035892">
    <property type="entry name" value="C2_domain_sf"/>
</dbReference>
<dbReference type="InterPro" id="IPR010439">
    <property type="entry name" value="MUN_dom"/>
</dbReference>
<dbReference type="InterPro" id="IPR014770">
    <property type="entry name" value="Munc13_1"/>
</dbReference>
<dbReference type="InterPro" id="IPR014772">
    <property type="entry name" value="Munc13_dom-2"/>
</dbReference>
<dbReference type="InterPro" id="IPR052095">
    <property type="entry name" value="UNC-13_domain"/>
</dbReference>
<dbReference type="PANTHER" id="PTHR45999:SF1">
    <property type="entry name" value="BAI1-ASSOCIATED PROTEIN 3"/>
    <property type="match status" value="1"/>
</dbReference>
<dbReference type="PANTHER" id="PTHR45999">
    <property type="entry name" value="UNC-13-4A, ISOFORM B"/>
    <property type="match status" value="1"/>
</dbReference>
<dbReference type="Pfam" id="PF00168">
    <property type="entry name" value="C2"/>
    <property type="match status" value="3"/>
</dbReference>
<dbReference type="Pfam" id="PF06292">
    <property type="entry name" value="MUN"/>
    <property type="match status" value="1"/>
</dbReference>
<dbReference type="SMART" id="SM00239">
    <property type="entry name" value="C2"/>
    <property type="match status" value="2"/>
</dbReference>
<dbReference type="SUPFAM" id="SSF49562">
    <property type="entry name" value="C2 domain (Calcium/lipid-binding domain, CaLB)"/>
    <property type="match status" value="2"/>
</dbReference>
<dbReference type="PROSITE" id="PS50004">
    <property type="entry name" value="C2"/>
    <property type="match status" value="2"/>
</dbReference>
<dbReference type="PROSITE" id="PS51258">
    <property type="entry name" value="MHD1"/>
    <property type="match status" value="1"/>
</dbReference>
<dbReference type="PROSITE" id="PS51259">
    <property type="entry name" value="MHD2"/>
    <property type="match status" value="1"/>
</dbReference>
<name>BAIP3_MOUSE</name>
<reference key="1">
    <citation type="journal article" date="2003" name="DNA Res.">
        <title>Prediction of the coding sequences of mouse homologues of KIAA gene: II. The complete nucleotide sequences of 400 mouse KIAA-homologous cDNAs identified by screening of terminal sequences of cDNA clones randomly sampled from size-fractionated libraries.</title>
        <authorList>
            <person name="Okazaki N."/>
            <person name="Kikuno R."/>
            <person name="Ohara R."/>
            <person name="Inamoto S."/>
            <person name="Aizawa H."/>
            <person name="Yuasa S."/>
            <person name="Nakajima D."/>
            <person name="Nagase T."/>
            <person name="Ohara O."/>
            <person name="Koga H."/>
        </authorList>
    </citation>
    <scope>NUCLEOTIDE SEQUENCE [LARGE SCALE MRNA]</scope>
    <source>
        <tissue>Brain</tissue>
    </source>
</reference>
<reference key="2">
    <citation type="submission" date="2003-11" db="EMBL/GenBank/DDBJ databases">
        <title>Genomic sequence analysis in the mouse T-complex region.</title>
        <authorList>
            <person name="Brathwaite M.E."/>
            <person name="Waeltz P."/>
            <person name="Qian Y."/>
            <person name="Dudekula D."/>
            <person name="Schlessinger D."/>
            <person name="Nagaraja R."/>
        </authorList>
    </citation>
    <scope>NUCLEOTIDE SEQUENCE [LARGE SCALE GENOMIC DNA]</scope>
    <source>
        <strain>C57BL/6J</strain>
    </source>
</reference>
<reference key="3">
    <citation type="journal article" date="2009" name="PLoS Biol.">
        <title>Lineage-specific biology revealed by a finished genome assembly of the mouse.</title>
        <authorList>
            <person name="Church D.M."/>
            <person name="Goodstadt L."/>
            <person name="Hillier L.W."/>
            <person name="Zody M.C."/>
            <person name="Goldstein S."/>
            <person name="She X."/>
            <person name="Bult C.J."/>
            <person name="Agarwala R."/>
            <person name="Cherry J.L."/>
            <person name="DiCuccio M."/>
            <person name="Hlavina W."/>
            <person name="Kapustin Y."/>
            <person name="Meric P."/>
            <person name="Maglott D."/>
            <person name="Birtle Z."/>
            <person name="Marques A.C."/>
            <person name="Graves T."/>
            <person name="Zhou S."/>
            <person name="Teague B."/>
            <person name="Potamousis K."/>
            <person name="Churas C."/>
            <person name="Place M."/>
            <person name="Herschleb J."/>
            <person name="Runnheim R."/>
            <person name="Forrest D."/>
            <person name="Amos-Landgraf J."/>
            <person name="Schwartz D.C."/>
            <person name="Cheng Z."/>
            <person name="Lindblad-Toh K."/>
            <person name="Eichler E.E."/>
            <person name="Ponting C.P."/>
        </authorList>
    </citation>
    <scope>NUCLEOTIDE SEQUENCE [LARGE SCALE GENOMIC DNA]</scope>
    <source>
        <strain>C57BL/6J</strain>
    </source>
</reference>
<reference key="4">
    <citation type="journal article" date="2002" name="Cancer Cell">
        <title>Induction of BAIAP3 by the EWS-WT1 chimeric fusion implicates regulated exocytosis in tumorigenesis.</title>
        <authorList>
            <person name="Palmer R.E."/>
            <person name="Lee S.B."/>
            <person name="Wong J.C."/>
            <person name="Reynolds P.A."/>
            <person name="Zhang H."/>
            <person name="Truong V."/>
            <person name="Oliner J.D."/>
            <person name="Gerald W.L."/>
            <person name="Haber D.A."/>
        </authorList>
    </citation>
    <scope>SUBCELLULAR LOCATION</scope>
    <scope>TISSUE SPECIFICITY</scope>
</reference>
<reference key="5">
    <citation type="journal article" date="2010" name="Cell">
        <title>A tissue-specific atlas of mouse protein phosphorylation and expression.</title>
        <authorList>
            <person name="Huttlin E.L."/>
            <person name="Jedrychowski M.P."/>
            <person name="Elias J.E."/>
            <person name="Goswami T."/>
            <person name="Rad R."/>
            <person name="Beausoleil S.A."/>
            <person name="Villen J."/>
            <person name="Haas W."/>
            <person name="Sowa M.E."/>
            <person name="Gygi S.P."/>
        </authorList>
    </citation>
    <scope>IDENTIFICATION BY MASS SPECTROMETRY [LARGE SCALE ANALYSIS]</scope>
    <source>
        <tissue>Brain</tissue>
    </source>
</reference>
<reference key="6">
    <citation type="journal article" date="2013" name="Mol. Med.">
        <title>Genetic markers of a Munc13 protein family member, BAIAP3, are gender specifically associated with anxiety and benzodiazepine abuse in mice and humans.</title>
        <authorList>
            <person name="Wojcik S.M."/>
            <person name="Tantra M."/>
            <person name="Stepniak B."/>
            <person name="Man K.N."/>
            <person name="Mueller-Ribbe K."/>
            <person name="Begemann M."/>
            <person name="Ju A."/>
            <person name="Papiol S."/>
            <person name="Ronnenberg A."/>
            <person name="Gurvich A."/>
            <person name="Shin Y."/>
            <person name="Augustin I."/>
            <person name="Brose N."/>
            <person name="Ehrenreich H."/>
        </authorList>
    </citation>
    <scope>FUNCTION</scope>
    <scope>TISSUE SPECIFICITY</scope>
    <scope>DISRUPTION PHENOTYPE</scope>
</reference>
<accession>Q80TT2</accession>
<accession>E9QQ76</accession>
<accession>Q6RUT4</accession>
<accession>S4R1E7</accession>
<comment type="function">
    <text evidence="1 12">Functions in endosome to Golgi retrograde transport. In response to calcium influx, may interact with SNARE fusion receptors and membrane phospholipids to mediate endosome fusion with the trans-Golgi network. By promoting the recycling of secretory vesicle transmembrane proteins, it indirectly controls dense-core secretory vesicle biogenesis, maturation and their ability to mediate the constitutive and regulated secretion of neurotransmitters and hormones. May regulate behavior and food intake by controlling calcium-stimulated exocytosis of neurotransmitters including NPY and serotonin and hormones like insulin (By similarity). Proposed to play a role in hypothalamic neuronal firing by modulating gamma-aminobutyric acid (GABA)ergic inhibitory neurotransmission (Probable).</text>
</comment>
<comment type="cofactor">
    <cofactor evidence="2">
        <name>Ca(2+)</name>
        <dbReference type="ChEBI" id="CHEBI:29108"/>
    </cofactor>
    <text evidence="2">Binds 3 Ca(2+) ions per C2 domain.</text>
</comment>
<comment type="subunit">
    <text evidence="1">Interacts with ADGRB1, this interaction is direct. Interacts with endosomal SNARE proteins VAMP3, VAMP4, STX6 and STX16; this interaction is increased in the presence of calcium.</text>
</comment>
<comment type="subcellular location">
    <subcellularLocation>
        <location evidence="6">Cytoplasm</location>
        <location evidence="6">Cytosol</location>
    </subcellularLocation>
    <subcellularLocation>
        <location evidence="1">Recycling endosome membrane</location>
        <topology evidence="1">Peripheral membrane protein</topology>
    </subcellularLocation>
    <subcellularLocation>
        <location evidence="1">Late endosome membrane</location>
        <topology evidence="1">Peripheral membrane protein</topology>
    </subcellularLocation>
    <subcellularLocation>
        <location evidence="1">Golgi apparatus</location>
        <location evidence="1">trans-Golgi network membrane</location>
        <topology evidence="1">Peripheral membrane protein</topology>
    </subcellularLocation>
    <subcellularLocation>
        <location evidence="1">Cell membrane</location>
        <topology evidence="1">Peripheral membrane protein</topology>
    </subcellularLocation>
    <text evidence="1">Rapidly recruited to the plasma membrane and to Golgi structures in response to increased intracellular calcium concentration.</text>
</comment>
<comment type="alternative products">
    <event type="alternative splicing"/>
    <isoform>
        <id>Q80TT2-2</id>
        <name>2</name>
        <sequence type="displayed"/>
    </isoform>
    <isoform>
        <id>Q80TT2-1</id>
        <name>1</name>
        <sequence type="described" ref="VSP_061750"/>
    </isoform>
</comment>
<comment type="tissue specificity">
    <text evidence="6 7">Prominently expressed in brain structures including hypothalamus, amygdala, stria terminalis and periaqueductal gray (at protein level). Expressed in nonneuronal tissues, including placenta, lung, pancreas, spleen, and testes. Within placenta, expression is restricted to the syncytiotrophoblasts.</text>
</comment>
<comment type="disruption phenotype">
    <text evidence="7">Mutant mice are viable, fertile and have overall normal development. Behavioral phenotyping show increased susceptibility to pentylenetetrazole-induced seizures, increased anxiety in females, and benzodiazepine tolerance in males.</text>
</comment>
<comment type="similarity">
    <text evidence="11">Belongs to the unc-13 family.</text>
</comment>
<comment type="sequence caution" evidence="11">
    <conflict type="erroneous translation">
        <sequence resource="EMBL-CDS" id="BAC65640"/>
    </conflict>
    <text>Wrong choice of CDS.</text>
</comment>
<gene>
    <name evidence="8 10 13" type="primary">Baiap3</name>
    <name type="synonym">Gm937</name>
    <name evidence="9" type="synonym">Kiaa0734</name>
</gene>
<sequence>MSTLLDIKSSVLRQVQVCPSFRRKTEQEPEVTNSQEPPTGAWKPGDGVEFFAHMRLILKKGDGRQGLPCPEVLLRSGSPAPAEPVDPNRGLRTLTQEEVEMLYEEALYTVLHRAGTMGPDQVDDEEVLLSYLQQVFGTSSEEHMEAIMRVKKAKAPTYALKVSVMRAKNLLAKDPNGFSDPYCMLGILPASSAPQEPSGQKEQRFGFRKGSKRSSPLPAKCIQVTEVKNSTLNPVWKEHFLFEIDDVNTDQLHLDIWDHDDDVSLAEACRKLNEVIGLKGMTRYFKQIVKSARANGTAGPTEDHTDDFLGCLNIPIREVPVAGADRWFKLEPRSSASRVQGDCHLVLKLITTQRDTVMSQRGRSGFLSYLLLLSRVLRFEHRVEEPNSSSWRGELSGPGTTVLCLHGAQSNLSPLQLAVLHWQVSSRHHQTRTLDYGYLLGLLEDVQAHWEEAASLPQEQEESLADSFSAFSEFGLRLLRQLRDYFPATNSTAVYRLELLLKCLEKLQLFQPAFEICPFETELSMDIAAALKRGNREWYDQLLNTKSPREQPGPQRLAGLVELADIIYEDLQLCYGVYASLFHGILKVDFFTLTFRQLERLVAEEAWVLTEELSPKMNLEVASGLFELYLTLADTQRFWSCIPGRESRSLALAGIHTPFLPAVKLWLQVLRDQAKWRLQGAVDVDTLEPVDAASKHSSSAATASLCLSHIQELWVRLAWPDPSQAQGLGTQLSQDMCEASLFYTELLRKKVDTQPGAAGEAVSEQLCVVLNNVELVRRASGQALRGLAWSEGASGLEGVLPRPLLSCIQALDEDLHREAHTVTAHLTSKMVADIRKYIQHISLSPDSIQNDEAVAPLLKYLDEKLALLNDALVKENLNRVLEALWELLLQAILQALSANRDVSADFYGRFHFTLEALVSFFHAEGQGLPLENLRDGSYKRLQEELRLHKCSTRECIEQFYLDKLKQRSLEQNRFGRLTVRCHYEAAEQRLAVEVLHAADLLPLDANGLSDPFVIVELGPPHLFPLVRSQRTQVKARTLHPVYDELFHFSVPAEACRRRGACVLFTVMDHDWLSTNDFAGEAALGLGGISGIARPHVGGGMRPGQPITLHLRRPRAQVRSALRMLEGRTSREAQEFVKKLKELEKCMEADL</sequence>
<protein>
    <recommendedName>
        <fullName>BAI1-associated protein 3</fullName>
        <shortName>BAP3</shortName>
    </recommendedName>
    <alternativeName>
        <fullName evidence="10">Brain-specific angiogenesis inhibitor I-associated protein 3</fullName>
        <shortName evidence="10">Baiap3</shortName>
    </alternativeName>
</protein>
<keyword id="KW-0025">Alternative splicing</keyword>
<keyword id="KW-0106">Calcium</keyword>
<keyword id="KW-1003">Cell membrane</keyword>
<keyword id="KW-0963">Cytoplasm</keyword>
<keyword id="KW-0967">Endosome</keyword>
<keyword id="KW-0268">Exocytosis</keyword>
<keyword id="KW-0333">Golgi apparatus</keyword>
<keyword id="KW-0472">Membrane</keyword>
<keyword id="KW-0479">Metal-binding</keyword>
<keyword id="KW-1185">Reference proteome</keyword>
<keyword id="KW-0677">Repeat</keyword>
<keyword id="KW-0813">Transport</keyword>